<comment type="function">
    <text evidence="1">Multifunctional RNA-binding protein that recognizes the K-turn motif in ribosomal RNA, the RNA component of RNase P, box H/ACA, box C/D and box C'/D' sRNAs.</text>
</comment>
<comment type="subunit">
    <text evidence="1">Part of the 50S ribosomal subunit. Probably part of the RNase P complex.</text>
</comment>
<comment type="subcellular location">
    <subcellularLocation>
        <location evidence="1">Cytoplasm</location>
    </subcellularLocation>
</comment>
<comment type="similarity">
    <text evidence="1">Belongs to the eukaryotic ribosomal protein eL8 family.</text>
</comment>
<sequence length="120" mass="12701">MSVYVDFDVPADLEDDALEALEVARDTGSVKKGTNETTKAVERGNAELVFVAEDVSPEEVVMHLPEIATEKEIPYVFVGTQDDIGHAAGLQVGSAAAAIVDAGEANGEVEDIAEKVEELQ</sequence>
<organism>
    <name type="scientific">Natronomonas pharaonis (strain ATCC 35678 / DSM 2160 / CIP 103997 / JCM 8858 / NBRC 14720 / NCIMB 2260 / Gabara)</name>
    <name type="common">Halobacterium pharaonis</name>
    <dbReference type="NCBI Taxonomy" id="348780"/>
    <lineage>
        <taxon>Archaea</taxon>
        <taxon>Methanobacteriati</taxon>
        <taxon>Methanobacteriota</taxon>
        <taxon>Stenosarchaea group</taxon>
        <taxon>Halobacteria</taxon>
        <taxon>Halobacteriales</taxon>
        <taxon>Haloarculaceae</taxon>
        <taxon>Natronomonas</taxon>
    </lineage>
</organism>
<keyword id="KW-0963">Cytoplasm</keyword>
<keyword id="KW-1185">Reference proteome</keyword>
<keyword id="KW-0687">Ribonucleoprotein</keyword>
<keyword id="KW-0689">Ribosomal protein</keyword>
<keyword id="KW-0694">RNA-binding</keyword>
<keyword id="KW-0699">rRNA-binding</keyword>
<keyword id="KW-0819">tRNA processing</keyword>
<reference key="1">
    <citation type="journal article" date="2005" name="Genome Res.">
        <title>Living with two extremes: conclusions from the genome sequence of Natronomonas pharaonis.</title>
        <authorList>
            <person name="Falb M."/>
            <person name="Pfeiffer F."/>
            <person name="Palm P."/>
            <person name="Rodewald K."/>
            <person name="Hickmann V."/>
            <person name="Tittor J."/>
            <person name="Oesterhelt D."/>
        </authorList>
    </citation>
    <scope>NUCLEOTIDE SEQUENCE [LARGE SCALE GENOMIC DNA]</scope>
    <source>
        <strain>ATCC 35678 / DSM 2160 / CIP 103997 / JCM 8858 / NBRC 14720 / NCIMB 2260 / Gabara</strain>
    </source>
</reference>
<dbReference type="EMBL" id="CR936257">
    <property type="protein sequence ID" value="CAI49921.1"/>
    <property type="molecule type" value="Genomic_DNA"/>
</dbReference>
<dbReference type="RefSeq" id="WP_011323539.1">
    <property type="nucleotide sequence ID" value="NC_007426.1"/>
</dbReference>
<dbReference type="SMR" id="Q3IPM9"/>
<dbReference type="STRING" id="348780.NP_3660A"/>
<dbReference type="EnsemblBacteria" id="CAI49921">
    <property type="protein sequence ID" value="CAI49921"/>
    <property type="gene ID" value="NP_3660A"/>
</dbReference>
<dbReference type="GeneID" id="3703148"/>
<dbReference type="KEGG" id="nph:NP_3660A"/>
<dbReference type="eggNOG" id="arCOG01751">
    <property type="taxonomic scope" value="Archaea"/>
</dbReference>
<dbReference type="HOGENOM" id="CLU_084513_4_0_2"/>
<dbReference type="OrthoDB" id="25810at2157"/>
<dbReference type="Proteomes" id="UP000002698">
    <property type="component" value="Chromosome"/>
</dbReference>
<dbReference type="GO" id="GO:0005737">
    <property type="term" value="C:cytoplasm"/>
    <property type="evidence" value="ECO:0007669"/>
    <property type="project" value="UniProtKB-SubCell"/>
</dbReference>
<dbReference type="GO" id="GO:1990904">
    <property type="term" value="C:ribonucleoprotein complex"/>
    <property type="evidence" value="ECO:0007669"/>
    <property type="project" value="UniProtKB-KW"/>
</dbReference>
<dbReference type="GO" id="GO:0005840">
    <property type="term" value="C:ribosome"/>
    <property type="evidence" value="ECO:0007669"/>
    <property type="project" value="UniProtKB-KW"/>
</dbReference>
<dbReference type="GO" id="GO:0004526">
    <property type="term" value="F:ribonuclease P activity"/>
    <property type="evidence" value="ECO:0007669"/>
    <property type="project" value="UniProtKB-UniRule"/>
</dbReference>
<dbReference type="GO" id="GO:0019843">
    <property type="term" value="F:rRNA binding"/>
    <property type="evidence" value="ECO:0007669"/>
    <property type="project" value="UniProtKB-KW"/>
</dbReference>
<dbReference type="GO" id="GO:0003735">
    <property type="term" value="F:structural constituent of ribosome"/>
    <property type="evidence" value="ECO:0007669"/>
    <property type="project" value="InterPro"/>
</dbReference>
<dbReference type="GO" id="GO:0006412">
    <property type="term" value="P:translation"/>
    <property type="evidence" value="ECO:0007669"/>
    <property type="project" value="UniProtKB-UniRule"/>
</dbReference>
<dbReference type="GO" id="GO:0001682">
    <property type="term" value="P:tRNA 5'-leader removal"/>
    <property type="evidence" value="ECO:0007669"/>
    <property type="project" value="UniProtKB-UniRule"/>
</dbReference>
<dbReference type="FunFam" id="3.30.1330.30:FF:000020">
    <property type="entry name" value="50S ribosomal protein L7Ae"/>
    <property type="match status" value="1"/>
</dbReference>
<dbReference type="Gene3D" id="3.30.1330.30">
    <property type="match status" value="1"/>
</dbReference>
<dbReference type="HAMAP" id="MF_00326">
    <property type="entry name" value="Ribosomal_eL8"/>
    <property type="match status" value="1"/>
</dbReference>
<dbReference type="InterPro" id="IPR050257">
    <property type="entry name" value="eL8/uL1-like"/>
</dbReference>
<dbReference type="InterPro" id="IPR029064">
    <property type="entry name" value="Ribosomal_eL30-like_sf"/>
</dbReference>
<dbReference type="InterPro" id="IPR004038">
    <property type="entry name" value="Ribosomal_eL8/eL30/eS12/Gad45"/>
</dbReference>
<dbReference type="InterPro" id="IPR018492">
    <property type="entry name" value="Ribosomal_eL8/Nhp2"/>
</dbReference>
<dbReference type="InterPro" id="IPR022481">
    <property type="entry name" value="Ribosomal_eL8_arc"/>
</dbReference>
<dbReference type="NCBIfam" id="TIGR03677">
    <property type="entry name" value="eL8_ribo"/>
    <property type="match status" value="1"/>
</dbReference>
<dbReference type="PANTHER" id="PTHR23105">
    <property type="entry name" value="RIBOSOMAL PROTEIN L7AE FAMILY MEMBER"/>
    <property type="match status" value="1"/>
</dbReference>
<dbReference type="Pfam" id="PF01248">
    <property type="entry name" value="Ribosomal_L7Ae"/>
    <property type="match status" value="1"/>
</dbReference>
<dbReference type="PRINTS" id="PR00881">
    <property type="entry name" value="L7ARS6FAMILY"/>
</dbReference>
<dbReference type="PRINTS" id="PR00884">
    <property type="entry name" value="RIBOSOMALHS6"/>
</dbReference>
<dbReference type="SUPFAM" id="SSF55315">
    <property type="entry name" value="L30e-like"/>
    <property type="match status" value="1"/>
</dbReference>
<gene>
    <name evidence="1" type="primary">rpl7ae</name>
    <name type="ordered locus">NP_3660A</name>
</gene>
<name>RL7A_NATPD</name>
<proteinExistence type="inferred from homology"/>
<evidence type="ECO:0000255" key="1">
    <source>
        <dbReference type="HAMAP-Rule" id="MF_00326"/>
    </source>
</evidence>
<evidence type="ECO:0000305" key="2"/>
<feature type="chain" id="PRO_1000005031" description="Large ribosomal subunit protein eL8">
    <location>
        <begin position="1"/>
        <end position="120"/>
    </location>
</feature>
<protein>
    <recommendedName>
        <fullName evidence="1">Large ribosomal subunit protein eL8</fullName>
    </recommendedName>
    <alternativeName>
        <fullName evidence="2">50S ribosomal protein L7Ae</fullName>
    </alternativeName>
    <alternativeName>
        <fullName evidence="1">Ribosomal protein L8e</fullName>
    </alternativeName>
</protein>
<accession>Q3IPM9</accession>